<organism>
    <name type="scientific">Yersinia pseudotuberculosis serotype IB (strain PB1/+)</name>
    <dbReference type="NCBI Taxonomy" id="502801"/>
    <lineage>
        <taxon>Bacteria</taxon>
        <taxon>Pseudomonadati</taxon>
        <taxon>Pseudomonadota</taxon>
        <taxon>Gammaproteobacteria</taxon>
        <taxon>Enterobacterales</taxon>
        <taxon>Yersiniaceae</taxon>
        <taxon>Yersinia</taxon>
    </lineage>
</organism>
<name>TTCA_YERPB</name>
<protein>
    <recommendedName>
        <fullName evidence="1">tRNA-cytidine(32) 2-sulfurtransferase</fullName>
        <ecNumber evidence="1">2.8.1.-</ecNumber>
    </recommendedName>
    <alternativeName>
        <fullName evidence="1">Two-thiocytidine biosynthesis protein A</fullName>
    </alternativeName>
    <alternativeName>
        <fullName evidence="1">tRNA 2-thiocytidine biosynthesis protein TtcA</fullName>
    </alternativeName>
</protein>
<gene>
    <name evidence="1" type="primary">ttcA</name>
    <name type="ordered locus">YPTS_2330</name>
</gene>
<accession>B2K5E0</accession>
<sequence>MLEKQSVNQKEQYNFNKLQKRLRRNVGQAIADFNMIEEGDRVMVCLSGGKDSYTMLDILQSLQKSAPINFSLIAVNLDQKQPGFPEDILPAYLDKQGVEYKIVEENTYGIVKEIIPDGKTTCSLCSRLRRGILYRTATELGATKIALGHHRDDILQTLFLNMFYGGKLKGMPPKLMSDDGKHIVIRPLAYCREKDIERFAVAREYPIIPCNLCGSQPNLQRQVIKDMLRDWDKQYPGRIETMFSAMQNVVPSHLNDHKLFDFKSITHDSDIIDGGDLAFDREALPLNPVGWQPEDDEDTEKRPSVRLDVLEIK</sequence>
<feature type="chain" id="PRO_0000348887" description="tRNA-cytidine(32) 2-sulfurtransferase">
    <location>
        <begin position="1"/>
        <end position="313"/>
    </location>
</feature>
<feature type="short sequence motif" description="PP-loop motif" evidence="1">
    <location>
        <begin position="47"/>
        <end position="52"/>
    </location>
</feature>
<feature type="binding site" evidence="1">
    <location>
        <position position="122"/>
    </location>
    <ligand>
        <name>[4Fe-4S] cluster</name>
        <dbReference type="ChEBI" id="CHEBI:49883"/>
    </ligand>
</feature>
<feature type="binding site" evidence="1">
    <location>
        <position position="125"/>
    </location>
    <ligand>
        <name>[4Fe-4S] cluster</name>
        <dbReference type="ChEBI" id="CHEBI:49883"/>
    </ligand>
</feature>
<feature type="binding site" evidence="1">
    <location>
        <position position="213"/>
    </location>
    <ligand>
        <name>[4Fe-4S] cluster</name>
        <dbReference type="ChEBI" id="CHEBI:49883"/>
    </ligand>
</feature>
<keyword id="KW-0004">4Fe-4S</keyword>
<keyword id="KW-0067">ATP-binding</keyword>
<keyword id="KW-0963">Cytoplasm</keyword>
<keyword id="KW-0408">Iron</keyword>
<keyword id="KW-0411">Iron-sulfur</keyword>
<keyword id="KW-0460">Magnesium</keyword>
<keyword id="KW-0479">Metal-binding</keyword>
<keyword id="KW-0547">Nucleotide-binding</keyword>
<keyword id="KW-0694">RNA-binding</keyword>
<keyword id="KW-0808">Transferase</keyword>
<keyword id="KW-0819">tRNA processing</keyword>
<keyword id="KW-0820">tRNA-binding</keyword>
<dbReference type="EC" id="2.8.1.-" evidence="1"/>
<dbReference type="EMBL" id="CP001048">
    <property type="protein sequence ID" value="ACC89291.1"/>
    <property type="molecule type" value="Genomic_DNA"/>
</dbReference>
<dbReference type="RefSeq" id="WP_011192516.1">
    <property type="nucleotide sequence ID" value="NZ_CP009780.1"/>
</dbReference>
<dbReference type="SMR" id="B2K5E0"/>
<dbReference type="GeneID" id="49785749"/>
<dbReference type="KEGG" id="ypb:YPTS_2330"/>
<dbReference type="PATRIC" id="fig|502801.10.peg.1730"/>
<dbReference type="GO" id="GO:0005737">
    <property type="term" value="C:cytoplasm"/>
    <property type="evidence" value="ECO:0007669"/>
    <property type="project" value="UniProtKB-SubCell"/>
</dbReference>
<dbReference type="GO" id="GO:0051539">
    <property type="term" value="F:4 iron, 4 sulfur cluster binding"/>
    <property type="evidence" value="ECO:0007669"/>
    <property type="project" value="UniProtKB-UniRule"/>
</dbReference>
<dbReference type="GO" id="GO:0005524">
    <property type="term" value="F:ATP binding"/>
    <property type="evidence" value="ECO:0007669"/>
    <property type="project" value="UniProtKB-UniRule"/>
</dbReference>
<dbReference type="GO" id="GO:0000287">
    <property type="term" value="F:magnesium ion binding"/>
    <property type="evidence" value="ECO:0007669"/>
    <property type="project" value="UniProtKB-UniRule"/>
</dbReference>
<dbReference type="GO" id="GO:0016783">
    <property type="term" value="F:sulfurtransferase activity"/>
    <property type="evidence" value="ECO:0007669"/>
    <property type="project" value="UniProtKB-UniRule"/>
</dbReference>
<dbReference type="GO" id="GO:0000049">
    <property type="term" value="F:tRNA binding"/>
    <property type="evidence" value="ECO:0007669"/>
    <property type="project" value="UniProtKB-KW"/>
</dbReference>
<dbReference type="GO" id="GO:0034227">
    <property type="term" value="P:tRNA thio-modification"/>
    <property type="evidence" value="ECO:0007669"/>
    <property type="project" value="UniProtKB-UniRule"/>
</dbReference>
<dbReference type="CDD" id="cd24138">
    <property type="entry name" value="TtcA-like"/>
    <property type="match status" value="1"/>
</dbReference>
<dbReference type="Gene3D" id="3.40.50.620">
    <property type="entry name" value="HUPs"/>
    <property type="match status" value="1"/>
</dbReference>
<dbReference type="HAMAP" id="MF_01850">
    <property type="entry name" value="TtcA"/>
    <property type="match status" value="1"/>
</dbReference>
<dbReference type="InterPro" id="IPR014729">
    <property type="entry name" value="Rossmann-like_a/b/a_fold"/>
</dbReference>
<dbReference type="InterPro" id="IPR011063">
    <property type="entry name" value="TilS/TtcA_N"/>
</dbReference>
<dbReference type="InterPro" id="IPR012089">
    <property type="entry name" value="tRNA_Cyd_32_2_STrfase"/>
</dbReference>
<dbReference type="InterPro" id="IPR035107">
    <property type="entry name" value="tRNA_thiolation_TtcA_Ctu1"/>
</dbReference>
<dbReference type="NCBIfam" id="NF007972">
    <property type="entry name" value="PRK10696.1"/>
    <property type="match status" value="1"/>
</dbReference>
<dbReference type="PANTHER" id="PTHR43686:SF1">
    <property type="entry name" value="AMINOTRAN_5 DOMAIN-CONTAINING PROTEIN"/>
    <property type="match status" value="1"/>
</dbReference>
<dbReference type="PANTHER" id="PTHR43686">
    <property type="entry name" value="SULFURTRANSFERASE-RELATED"/>
    <property type="match status" value="1"/>
</dbReference>
<dbReference type="Pfam" id="PF01171">
    <property type="entry name" value="ATP_bind_3"/>
    <property type="match status" value="1"/>
</dbReference>
<dbReference type="PIRSF" id="PIRSF004976">
    <property type="entry name" value="ATPase_YdaO"/>
    <property type="match status" value="1"/>
</dbReference>
<dbReference type="SUPFAM" id="SSF52402">
    <property type="entry name" value="Adenine nucleotide alpha hydrolases-like"/>
    <property type="match status" value="1"/>
</dbReference>
<comment type="function">
    <text evidence="1">Catalyzes the ATP-dependent 2-thiolation of cytidine in position 32 of tRNA, to form 2-thiocytidine (s(2)C32). The sulfur atoms are provided by the cysteine/cysteine desulfurase (IscS) system.</text>
</comment>
<comment type="catalytic activity">
    <reaction evidence="1">
        <text>cytidine(32) in tRNA + S-sulfanyl-L-cysteinyl-[cysteine desulfurase] + AH2 + ATP = 2-thiocytidine(32) in tRNA + L-cysteinyl-[cysteine desulfurase] + A + AMP + diphosphate + H(+)</text>
        <dbReference type="Rhea" id="RHEA:57048"/>
        <dbReference type="Rhea" id="RHEA-COMP:10288"/>
        <dbReference type="Rhea" id="RHEA-COMP:12157"/>
        <dbReference type="Rhea" id="RHEA-COMP:12158"/>
        <dbReference type="Rhea" id="RHEA-COMP:14821"/>
        <dbReference type="ChEBI" id="CHEBI:13193"/>
        <dbReference type="ChEBI" id="CHEBI:15378"/>
        <dbReference type="ChEBI" id="CHEBI:17499"/>
        <dbReference type="ChEBI" id="CHEBI:29950"/>
        <dbReference type="ChEBI" id="CHEBI:30616"/>
        <dbReference type="ChEBI" id="CHEBI:33019"/>
        <dbReference type="ChEBI" id="CHEBI:61963"/>
        <dbReference type="ChEBI" id="CHEBI:82748"/>
        <dbReference type="ChEBI" id="CHEBI:141453"/>
        <dbReference type="ChEBI" id="CHEBI:456215"/>
    </reaction>
    <physiologicalReaction direction="left-to-right" evidence="1">
        <dbReference type="Rhea" id="RHEA:57049"/>
    </physiologicalReaction>
</comment>
<comment type="cofactor">
    <cofactor evidence="1">
        <name>Mg(2+)</name>
        <dbReference type="ChEBI" id="CHEBI:18420"/>
    </cofactor>
</comment>
<comment type="cofactor">
    <cofactor evidence="1">
        <name>[4Fe-4S] cluster</name>
        <dbReference type="ChEBI" id="CHEBI:49883"/>
    </cofactor>
    <text evidence="1">Binds 1 [4Fe-4S] cluster per subunit. The cluster is chelated by three Cys residues, the fourth Fe has a free coordination site that may bind a sulfur atom transferred from the persulfide of IscS.</text>
</comment>
<comment type="pathway">
    <text evidence="1">tRNA modification.</text>
</comment>
<comment type="subunit">
    <text evidence="1">Homodimer.</text>
</comment>
<comment type="subcellular location">
    <subcellularLocation>
        <location evidence="1">Cytoplasm</location>
    </subcellularLocation>
</comment>
<comment type="miscellaneous">
    <text evidence="1">The thiolation reaction likely consists of two steps: a first activation step by ATP to form an adenylated intermediate of the target base of tRNA, and a second nucleophilic substitution step of the sulfur (S) atom supplied by the hydrosulfide attached to the Fe-S cluster.</text>
</comment>
<comment type="similarity">
    <text evidence="1">Belongs to the TtcA family.</text>
</comment>
<proteinExistence type="inferred from homology"/>
<evidence type="ECO:0000255" key="1">
    <source>
        <dbReference type="HAMAP-Rule" id="MF_01850"/>
    </source>
</evidence>
<reference key="1">
    <citation type="submission" date="2008-04" db="EMBL/GenBank/DDBJ databases">
        <title>Complete sequence of Yersinia pseudotuberculosis PB1/+.</title>
        <authorList>
            <person name="Copeland A."/>
            <person name="Lucas S."/>
            <person name="Lapidus A."/>
            <person name="Glavina del Rio T."/>
            <person name="Dalin E."/>
            <person name="Tice H."/>
            <person name="Bruce D."/>
            <person name="Goodwin L."/>
            <person name="Pitluck S."/>
            <person name="Munk A.C."/>
            <person name="Brettin T."/>
            <person name="Detter J.C."/>
            <person name="Han C."/>
            <person name="Tapia R."/>
            <person name="Schmutz J."/>
            <person name="Larimer F."/>
            <person name="Land M."/>
            <person name="Hauser L."/>
            <person name="Challacombe J.F."/>
            <person name="Green L."/>
            <person name="Lindler L.E."/>
            <person name="Nikolich M.P."/>
            <person name="Richardson P."/>
        </authorList>
    </citation>
    <scope>NUCLEOTIDE SEQUENCE [LARGE SCALE GENOMIC DNA]</scope>
    <source>
        <strain>PB1/+</strain>
    </source>
</reference>